<sequence length="388" mass="42845">MRYLTAGESHGPRLTAIIEGIPAGLPLTAEDINEDLRRRQGGYGRGGRMKIESDQVVFTSGVRHGKTTGAPITMDVINKDHQKWLDIMSAEDIEDRLKSKRKITHPRPGHADLVGGIKYRFDDLRNSLERSSARETTMRVAVGAVAKRLLAELDMEIANHVVVFGGKEIDVPENLTVAEIKQRAAQSEVSIVNQEREQEIKDYIDQIKRDGDTIGGVVETVVGGVPVGLGSYVQWDRKLDARLAQAVVSINAFKGVEFGLGFEAGYRKGSQVMDEILWSKEDGYTRRTNNLGGFEGGMTNGQPIVVRGVMKPIPTLYKPLMSVDIETHEPYKATVERSDPTALPAAGMVMEAVVATVLAQEILEKFSSDNLEELKEAVAKHRDYTKNY</sequence>
<evidence type="ECO:0000255" key="1">
    <source>
        <dbReference type="HAMAP-Rule" id="MF_00300"/>
    </source>
</evidence>
<comment type="function">
    <text evidence="1">Catalyzes the anti-1,4-elimination of the C-3 phosphate and the C-6 proR hydrogen from 5-enolpyruvylshikimate-3-phosphate (EPSP) to yield chorismate, which is the branch point compound that serves as the starting substrate for the three terminal pathways of aromatic amino acid biosynthesis. This reaction introduces a second double bond into the aromatic ring system.</text>
</comment>
<comment type="catalytic activity">
    <reaction evidence="1">
        <text>5-O-(1-carboxyvinyl)-3-phosphoshikimate = chorismate + phosphate</text>
        <dbReference type="Rhea" id="RHEA:21020"/>
        <dbReference type="ChEBI" id="CHEBI:29748"/>
        <dbReference type="ChEBI" id="CHEBI:43474"/>
        <dbReference type="ChEBI" id="CHEBI:57701"/>
        <dbReference type="EC" id="4.2.3.5"/>
    </reaction>
</comment>
<comment type="cofactor">
    <cofactor evidence="1">
        <name>FMNH2</name>
        <dbReference type="ChEBI" id="CHEBI:57618"/>
    </cofactor>
    <text evidence="1">Reduced FMN (FMNH(2)).</text>
</comment>
<comment type="pathway">
    <text evidence="1">Metabolic intermediate biosynthesis; chorismate biosynthesis; chorismate from D-erythrose 4-phosphate and phosphoenolpyruvate: step 7/7.</text>
</comment>
<comment type="subunit">
    <text evidence="1">Homotetramer.</text>
</comment>
<comment type="similarity">
    <text evidence="1">Belongs to the chorismate synthase family.</text>
</comment>
<gene>
    <name evidence="1" type="primary">aroC</name>
    <name type="ordered locus">SPH_1506</name>
</gene>
<keyword id="KW-0028">Amino-acid biosynthesis</keyword>
<keyword id="KW-0057">Aromatic amino acid biosynthesis</keyword>
<keyword id="KW-0274">FAD</keyword>
<keyword id="KW-0285">Flavoprotein</keyword>
<keyword id="KW-0288">FMN</keyword>
<keyword id="KW-0456">Lyase</keyword>
<keyword id="KW-0521">NADP</keyword>
<name>AROC_STRPI</name>
<proteinExistence type="inferred from homology"/>
<dbReference type="EC" id="4.2.3.5" evidence="1"/>
<dbReference type="EMBL" id="CP000936">
    <property type="protein sequence ID" value="ACA37188.1"/>
    <property type="molecule type" value="Genomic_DNA"/>
</dbReference>
<dbReference type="RefSeq" id="WP_001269866.1">
    <property type="nucleotide sequence ID" value="NC_010380.1"/>
</dbReference>
<dbReference type="SMR" id="B1ICH5"/>
<dbReference type="KEGG" id="spv:SPH_1506"/>
<dbReference type="HOGENOM" id="CLU_034547_2_0_9"/>
<dbReference type="UniPathway" id="UPA00053">
    <property type="reaction ID" value="UER00090"/>
</dbReference>
<dbReference type="Proteomes" id="UP000002163">
    <property type="component" value="Chromosome"/>
</dbReference>
<dbReference type="GO" id="GO:0005829">
    <property type="term" value="C:cytosol"/>
    <property type="evidence" value="ECO:0007669"/>
    <property type="project" value="TreeGrafter"/>
</dbReference>
<dbReference type="GO" id="GO:0004107">
    <property type="term" value="F:chorismate synthase activity"/>
    <property type="evidence" value="ECO:0007669"/>
    <property type="project" value="UniProtKB-UniRule"/>
</dbReference>
<dbReference type="GO" id="GO:0010181">
    <property type="term" value="F:FMN binding"/>
    <property type="evidence" value="ECO:0007669"/>
    <property type="project" value="TreeGrafter"/>
</dbReference>
<dbReference type="GO" id="GO:0008652">
    <property type="term" value="P:amino acid biosynthetic process"/>
    <property type="evidence" value="ECO:0007669"/>
    <property type="project" value="UniProtKB-KW"/>
</dbReference>
<dbReference type="GO" id="GO:0009073">
    <property type="term" value="P:aromatic amino acid family biosynthetic process"/>
    <property type="evidence" value="ECO:0007669"/>
    <property type="project" value="UniProtKB-KW"/>
</dbReference>
<dbReference type="GO" id="GO:0009423">
    <property type="term" value="P:chorismate biosynthetic process"/>
    <property type="evidence" value="ECO:0007669"/>
    <property type="project" value="UniProtKB-UniRule"/>
</dbReference>
<dbReference type="CDD" id="cd07304">
    <property type="entry name" value="Chorismate_synthase"/>
    <property type="match status" value="1"/>
</dbReference>
<dbReference type="FunFam" id="3.60.150.10:FF:000002">
    <property type="entry name" value="Chorismate synthase"/>
    <property type="match status" value="1"/>
</dbReference>
<dbReference type="Gene3D" id="3.60.150.10">
    <property type="entry name" value="Chorismate synthase AroC"/>
    <property type="match status" value="1"/>
</dbReference>
<dbReference type="HAMAP" id="MF_00300">
    <property type="entry name" value="Chorismate_synth"/>
    <property type="match status" value="1"/>
</dbReference>
<dbReference type="InterPro" id="IPR000453">
    <property type="entry name" value="Chorismate_synth"/>
</dbReference>
<dbReference type="InterPro" id="IPR035904">
    <property type="entry name" value="Chorismate_synth_AroC_sf"/>
</dbReference>
<dbReference type="InterPro" id="IPR020541">
    <property type="entry name" value="Chorismate_synthase_CS"/>
</dbReference>
<dbReference type="NCBIfam" id="TIGR00033">
    <property type="entry name" value="aroC"/>
    <property type="match status" value="1"/>
</dbReference>
<dbReference type="NCBIfam" id="NF003793">
    <property type="entry name" value="PRK05382.1"/>
    <property type="match status" value="1"/>
</dbReference>
<dbReference type="PANTHER" id="PTHR21085">
    <property type="entry name" value="CHORISMATE SYNTHASE"/>
    <property type="match status" value="1"/>
</dbReference>
<dbReference type="PANTHER" id="PTHR21085:SF0">
    <property type="entry name" value="CHORISMATE SYNTHASE"/>
    <property type="match status" value="1"/>
</dbReference>
<dbReference type="Pfam" id="PF01264">
    <property type="entry name" value="Chorismate_synt"/>
    <property type="match status" value="1"/>
</dbReference>
<dbReference type="PIRSF" id="PIRSF001456">
    <property type="entry name" value="Chorismate_synth"/>
    <property type="match status" value="1"/>
</dbReference>
<dbReference type="SUPFAM" id="SSF103263">
    <property type="entry name" value="Chorismate synthase, AroC"/>
    <property type="match status" value="1"/>
</dbReference>
<dbReference type="PROSITE" id="PS00787">
    <property type="entry name" value="CHORISMATE_SYNTHASE_1"/>
    <property type="match status" value="1"/>
</dbReference>
<dbReference type="PROSITE" id="PS00788">
    <property type="entry name" value="CHORISMATE_SYNTHASE_2"/>
    <property type="match status" value="1"/>
</dbReference>
<dbReference type="PROSITE" id="PS00789">
    <property type="entry name" value="CHORISMATE_SYNTHASE_3"/>
    <property type="match status" value="1"/>
</dbReference>
<organism>
    <name type="scientific">Streptococcus pneumoniae (strain Hungary19A-6)</name>
    <dbReference type="NCBI Taxonomy" id="487214"/>
    <lineage>
        <taxon>Bacteria</taxon>
        <taxon>Bacillati</taxon>
        <taxon>Bacillota</taxon>
        <taxon>Bacilli</taxon>
        <taxon>Lactobacillales</taxon>
        <taxon>Streptococcaceae</taxon>
        <taxon>Streptococcus</taxon>
    </lineage>
</organism>
<protein>
    <recommendedName>
        <fullName evidence="1">Chorismate synthase</fullName>
        <shortName evidence="1">CS</shortName>
        <ecNumber evidence="1">4.2.3.5</ecNumber>
    </recommendedName>
    <alternativeName>
        <fullName evidence="1">5-enolpyruvylshikimate-3-phosphate phospholyase</fullName>
    </alternativeName>
</protein>
<accession>B1ICH5</accession>
<reference key="1">
    <citation type="journal article" date="2010" name="Genome Biol.">
        <title>Structure and dynamics of the pan-genome of Streptococcus pneumoniae and closely related species.</title>
        <authorList>
            <person name="Donati C."/>
            <person name="Hiller N.L."/>
            <person name="Tettelin H."/>
            <person name="Muzzi A."/>
            <person name="Croucher N.J."/>
            <person name="Angiuoli S.V."/>
            <person name="Oggioni M."/>
            <person name="Dunning Hotopp J.C."/>
            <person name="Hu F.Z."/>
            <person name="Riley D.R."/>
            <person name="Covacci A."/>
            <person name="Mitchell T.J."/>
            <person name="Bentley S.D."/>
            <person name="Kilian M."/>
            <person name="Ehrlich G.D."/>
            <person name="Rappuoli R."/>
            <person name="Moxon E.R."/>
            <person name="Masignani V."/>
        </authorList>
    </citation>
    <scope>NUCLEOTIDE SEQUENCE [LARGE SCALE GENOMIC DNA]</scope>
    <source>
        <strain>Hungary19A-6</strain>
    </source>
</reference>
<feature type="chain" id="PRO_1000115405" description="Chorismate synthase">
    <location>
        <begin position="1"/>
        <end position="388"/>
    </location>
</feature>
<feature type="binding site" evidence="1">
    <location>
        <position position="39"/>
    </location>
    <ligand>
        <name>NADP(+)</name>
        <dbReference type="ChEBI" id="CHEBI:58349"/>
    </ligand>
</feature>
<feature type="binding site" evidence="1">
    <location>
        <position position="45"/>
    </location>
    <ligand>
        <name>NADP(+)</name>
        <dbReference type="ChEBI" id="CHEBI:58349"/>
    </ligand>
</feature>
<feature type="binding site" evidence="1">
    <location>
        <begin position="130"/>
        <end position="132"/>
    </location>
    <ligand>
        <name>FMN</name>
        <dbReference type="ChEBI" id="CHEBI:58210"/>
    </ligand>
</feature>
<feature type="binding site" evidence="1">
    <location>
        <begin position="251"/>
        <end position="252"/>
    </location>
    <ligand>
        <name>FMN</name>
        <dbReference type="ChEBI" id="CHEBI:58210"/>
    </ligand>
</feature>
<feature type="binding site" evidence="1">
    <location>
        <position position="296"/>
    </location>
    <ligand>
        <name>FMN</name>
        <dbReference type="ChEBI" id="CHEBI:58210"/>
    </ligand>
</feature>
<feature type="binding site" evidence="1">
    <location>
        <begin position="311"/>
        <end position="315"/>
    </location>
    <ligand>
        <name>FMN</name>
        <dbReference type="ChEBI" id="CHEBI:58210"/>
    </ligand>
</feature>
<feature type="binding site" evidence="1">
    <location>
        <position position="337"/>
    </location>
    <ligand>
        <name>FMN</name>
        <dbReference type="ChEBI" id="CHEBI:58210"/>
    </ligand>
</feature>